<keyword id="KW-1185">Reference proteome</keyword>
<keyword id="KW-0687">Ribonucleoprotein</keyword>
<keyword id="KW-0689">Ribosomal protein</keyword>
<keyword id="KW-0694">RNA-binding</keyword>
<keyword id="KW-0699">rRNA-binding</keyword>
<proteinExistence type="inferred from homology"/>
<gene>
    <name evidence="1" type="primary">rplT</name>
    <name type="ordered locus">Saro_0686</name>
</gene>
<reference key="1">
    <citation type="submission" date="2006-01" db="EMBL/GenBank/DDBJ databases">
        <title>Complete sequence of Novosphingobium aromaticivorans DSM 12444.</title>
        <authorList>
            <consortium name="US DOE Joint Genome Institute"/>
            <person name="Copeland A."/>
            <person name="Lucas S."/>
            <person name="Lapidus A."/>
            <person name="Barry K."/>
            <person name="Detter J.C."/>
            <person name="Glavina T."/>
            <person name="Hammon N."/>
            <person name="Israni S."/>
            <person name="Pitluck S."/>
            <person name="Chain P."/>
            <person name="Malfatti S."/>
            <person name="Shin M."/>
            <person name="Vergez L."/>
            <person name="Schmutz J."/>
            <person name="Larimer F."/>
            <person name="Land M."/>
            <person name="Kyrpides N."/>
            <person name="Ivanova N."/>
            <person name="Fredrickson J."/>
            <person name="Balkwill D."/>
            <person name="Romine M.F."/>
            <person name="Richardson P."/>
        </authorList>
    </citation>
    <scope>NUCLEOTIDE SEQUENCE [LARGE SCALE GENOMIC DNA]</scope>
    <source>
        <strain>ATCC 700278 / DSM 12444 / CCUG 56034 / CIP 105152 / NBRC 16084 / F199</strain>
    </source>
</reference>
<sequence length="120" mass="13465">MSRIKRGVTTRAKHKRILDQAKGYRGRRKNTIRVARQAVEKAGQYAYRDRKVKKRSFRALWIQRINAAVRAEGLTYSQFIHGAKLAGIELDRKAMADLAMNEGAIFNAVIAQAKAALPAA</sequence>
<accession>Q2GAJ0</accession>
<protein>
    <recommendedName>
        <fullName evidence="1">Large ribosomal subunit protein bL20</fullName>
    </recommendedName>
    <alternativeName>
        <fullName evidence="2">50S ribosomal protein L20</fullName>
    </alternativeName>
</protein>
<feature type="chain" id="PRO_0000243709" description="Large ribosomal subunit protein bL20">
    <location>
        <begin position="1"/>
        <end position="120"/>
    </location>
</feature>
<name>RL20_NOVAD</name>
<organism>
    <name type="scientific">Novosphingobium aromaticivorans (strain ATCC 700278 / DSM 12444 / CCUG 56034 / CIP 105152 / NBRC 16084 / F199)</name>
    <dbReference type="NCBI Taxonomy" id="279238"/>
    <lineage>
        <taxon>Bacteria</taxon>
        <taxon>Pseudomonadati</taxon>
        <taxon>Pseudomonadota</taxon>
        <taxon>Alphaproteobacteria</taxon>
        <taxon>Sphingomonadales</taxon>
        <taxon>Sphingomonadaceae</taxon>
        <taxon>Novosphingobium</taxon>
    </lineage>
</organism>
<comment type="function">
    <text evidence="1">Binds directly to 23S ribosomal RNA and is necessary for the in vitro assembly process of the 50S ribosomal subunit. It is not involved in the protein synthesizing functions of that subunit.</text>
</comment>
<comment type="similarity">
    <text evidence="1">Belongs to the bacterial ribosomal protein bL20 family.</text>
</comment>
<evidence type="ECO:0000255" key="1">
    <source>
        <dbReference type="HAMAP-Rule" id="MF_00382"/>
    </source>
</evidence>
<evidence type="ECO:0000305" key="2"/>
<dbReference type="EMBL" id="CP000248">
    <property type="protein sequence ID" value="ABD25133.1"/>
    <property type="molecule type" value="Genomic_DNA"/>
</dbReference>
<dbReference type="RefSeq" id="WP_011444347.1">
    <property type="nucleotide sequence ID" value="NC_007794.1"/>
</dbReference>
<dbReference type="SMR" id="Q2GAJ0"/>
<dbReference type="STRING" id="279238.Saro_0686"/>
<dbReference type="KEGG" id="nar:Saro_0686"/>
<dbReference type="eggNOG" id="COG0292">
    <property type="taxonomic scope" value="Bacteria"/>
</dbReference>
<dbReference type="HOGENOM" id="CLU_123265_0_1_5"/>
<dbReference type="Proteomes" id="UP000009134">
    <property type="component" value="Chromosome"/>
</dbReference>
<dbReference type="GO" id="GO:1990904">
    <property type="term" value="C:ribonucleoprotein complex"/>
    <property type="evidence" value="ECO:0007669"/>
    <property type="project" value="UniProtKB-KW"/>
</dbReference>
<dbReference type="GO" id="GO:0005840">
    <property type="term" value="C:ribosome"/>
    <property type="evidence" value="ECO:0007669"/>
    <property type="project" value="UniProtKB-KW"/>
</dbReference>
<dbReference type="GO" id="GO:0019843">
    <property type="term" value="F:rRNA binding"/>
    <property type="evidence" value="ECO:0007669"/>
    <property type="project" value="UniProtKB-UniRule"/>
</dbReference>
<dbReference type="GO" id="GO:0003735">
    <property type="term" value="F:structural constituent of ribosome"/>
    <property type="evidence" value="ECO:0007669"/>
    <property type="project" value="InterPro"/>
</dbReference>
<dbReference type="GO" id="GO:0000027">
    <property type="term" value="P:ribosomal large subunit assembly"/>
    <property type="evidence" value="ECO:0007669"/>
    <property type="project" value="UniProtKB-UniRule"/>
</dbReference>
<dbReference type="GO" id="GO:0006412">
    <property type="term" value="P:translation"/>
    <property type="evidence" value="ECO:0007669"/>
    <property type="project" value="InterPro"/>
</dbReference>
<dbReference type="CDD" id="cd07026">
    <property type="entry name" value="Ribosomal_L20"/>
    <property type="match status" value="1"/>
</dbReference>
<dbReference type="FunFam" id="1.10.1900.20:FF:000001">
    <property type="entry name" value="50S ribosomal protein L20"/>
    <property type="match status" value="1"/>
</dbReference>
<dbReference type="Gene3D" id="6.10.160.10">
    <property type="match status" value="1"/>
</dbReference>
<dbReference type="Gene3D" id="1.10.1900.20">
    <property type="entry name" value="Ribosomal protein L20"/>
    <property type="match status" value="1"/>
</dbReference>
<dbReference type="HAMAP" id="MF_00382">
    <property type="entry name" value="Ribosomal_bL20"/>
    <property type="match status" value="1"/>
</dbReference>
<dbReference type="InterPro" id="IPR005813">
    <property type="entry name" value="Ribosomal_bL20"/>
</dbReference>
<dbReference type="InterPro" id="IPR049946">
    <property type="entry name" value="RIBOSOMAL_L20_CS"/>
</dbReference>
<dbReference type="InterPro" id="IPR035566">
    <property type="entry name" value="Ribosomal_protein_bL20_C"/>
</dbReference>
<dbReference type="NCBIfam" id="TIGR01032">
    <property type="entry name" value="rplT_bact"/>
    <property type="match status" value="1"/>
</dbReference>
<dbReference type="PANTHER" id="PTHR10986">
    <property type="entry name" value="39S RIBOSOMAL PROTEIN L20"/>
    <property type="match status" value="1"/>
</dbReference>
<dbReference type="Pfam" id="PF00453">
    <property type="entry name" value="Ribosomal_L20"/>
    <property type="match status" value="1"/>
</dbReference>
<dbReference type="PRINTS" id="PR00062">
    <property type="entry name" value="RIBOSOMALL20"/>
</dbReference>
<dbReference type="SUPFAM" id="SSF74731">
    <property type="entry name" value="Ribosomal protein L20"/>
    <property type="match status" value="1"/>
</dbReference>
<dbReference type="PROSITE" id="PS00937">
    <property type="entry name" value="RIBOSOMAL_L20"/>
    <property type="match status" value="1"/>
</dbReference>